<sequence>MKRVVVLGSTGSIGQQALEVCRLRGYEVVGLAAGKNLEALSRQIALWKPRLVAAEESLHKELKARFPGLRLATAEEVAALEAEVAVAAIPGLAGLAPTRAAVRTGKRVALANKEAMVAAGPLLWREAEAHGAEILPVDSEHSALFQALLGERREDVAELILTASGGPFLREPEDLAQVTPEMALRHPRWRMGPKVTVDSATLFNKGLEVLEAKELFRFPLERIQVLIHPQAYVHGLVRFVDGSLKAQLGPTDMRLFIQYALTYPERAETPLKDLPIPGVLEFLEPDLKRFPALAVAYEAGRRGGLAQVAVSAADEVAVEAFLQGKIPFPRIPEILARVLEATPTEPLTWESLFAVDAWAREEAKRWA</sequence>
<comment type="function">
    <text evidence="1">Catalyzes the NADPH-dependent rearrangement and reduction of 1-deoxy-D-xylulose-5-phosphate (DXP) to 2-C-methyl-D-erythritol 4-phosphate (MEP).</text>
</comment>
<comment type="catalytic activity">
    <reaction evidence="1">
        <text>2-C-methyl-D-erythritol 4-phosphate + NADP(+) = 1-deoxy-D-xylulose 5-phosphate + NADPH + H(+)</text>
        <dbReference type="Rhea" id="RHEA:13717"/>
        <dbReference type="ChEBI" id="CHEBI:15378"/>
        <dbReference type="ChEBI" id="CHEBI:57783"/>
        <dbReference type="ChEBI" id="CHEBI:57792"/>
        <dbReference type="ChEBI" id="CHEBI:58262"/>
        <dbReference type="ChEBI" id="CHEBI:58349"/>
        <dbReference type="EC" id="1.1.1.267"/>
    </reaction>
    <physiologicalReaction direction="right-to-left" evidence="1">
        <dbReference type="Rhea" id="RHEA:13719"/>
    </physiologicalReaction>
</comment>
<comment type="cofactor">
    <cofactor evidence="1">
        <name>Mg(2+)</name>
        <dbReference type="ChEBI" id="CHEBI:18420"/>
    </cofactor>
    <cofactor evidence="1">
        <name>Mn(2+)</name>
        <dbReference type="ChEBI" id="CHEBI:29035"/>
    </cofactor>
</comment>
<comment type="pathway">
    <text evidence="1">Isoprenoid biosynthesis; isopentenyl diphosphate biosynthesis via DXP pathway; isopentenyl diphosphate from 1-deoxy-D-xylulose 5-phosphate: step 1/6.</text>
</comment>
<comment type="similarity">
    <text evidence="1">Belongs to the DXR family.</text>
</comment>
<accession>Q72KE2</accession>
<evidence type="ECO:0000255" key="1">
    <source>
        <dbReference type="HAMAP-Rule" id="MF_00183"/>
    </source>
</evidence>
<dbReference type="EC" id="1.1.1.267" evidence="1"/>
<dbReference type="EMBL" id="AE017221">
    <property type="protein sequence ID" value="AAS80852.1"/>
    <property type="molecule type" value="Genomic_DNA"/>
</dbReference>
<dbReference type="RefSeq" id="WP_011172949.1">
    <property type="nucleotide sequence ID" value="NC_005835.1"/>
</dbReference>
<dbReference type="SMR" id="Q72KE2"/>
<dbReference type="KEGG" id="tth:TT_C0504"/>
<dbReference type="eggNOG" id="COG0743">
    <property type="taxonomic scope" value="Bacteria"/>
</dbReference>
<dbReference type="HOGENOM" id="CLU_035714_4_0_0"/>
<dbReference type="OrthoDB" id="9806546at2"/>
<dbReference type="UniPathway" id="UPA00056">
    <property type="reaction ID" value="UER00092"/>
</dbReference>
<dbReference type="Proteomes" id="UP000000592">
    <property type="component" value="Chromosome"/>
</dbReference>
<dbReference type="GO" id="GO:0030604">
    <property type="term" value="F:1-deoxy-D-xylulose-5-phosphate reductoisomerase activity"/>
    <property type="evidence" value="ECO:0007669"/>
    <property type="project" value="UniProtKB-UniRule"/>
</dbReference>
<dbReference type="GO" id="GO:0030145">
    <property type="term" value="F:manganese ion binding"/>
    <property type="evidence" value="ECO:0007669"/>
    <property type="project" value="TreeGrafter"/>
</dbReference>
<dbReference type="GO" id="GO:0070402">
    <property type="term" value="F:NADPH binding"/>
    <property type="evidence" value="ECO:0007669"/>
    <property type="project" value="InterPro"/>
</dbReference>
<dbReference type="GO" id="GO:0051484">
    <property type="term" value="P:isopentenyl diphosphate biosynthetic process, methylerythritol 4-phosphate pathway involved in terpenoid biosynthetic process"/>
    <property type="evidence" value="ECO:0007669"/>
    <property type="project" value="TreeGrafter"/>
</dbReference>
<dbReference type="FunFam" id="3.40.50.720:FF:000045">
    <property type="entry name" value="1-deoxy-D-xylulose 5-phosphate reductoisomerase"/>
    <property type="match status" value="1"/>
</dbReference>
<dbReference type="Gene3D" id="1.10.1740.10">
    <property type="match status" value="1"/>
</dbReference>
<dbReference type="Gene3D" id="3.40.50.720">
    <property type="entry name" value="NAD(P)-binding Rossmann-like Domain"/>
    <property type="match status" value="1"/>
</dbReference>
<dbReference type="HAMAP" id="MF_00183">
    <property type="entry name" value="DXP_reductoisom"/>
    <property type="match status" value="1"/>
</dbReference>
<dbReference type="InterPro" id="IPR003821">
    <property type="entry name" value="DXP_reductoisomerase"/>
</dbReference>
<dbReference type="InterPro" id="IPR013644">
    <property type="entry name" value="DXP_reductoisomerase_C"/>
</dbReference>
<dbReference type="InterPro" id="IPR013512">
    <property type="entry name" value="DXP_reductoisomerase_N"/>
</dbReference>
<dbReference type="InterPro" id="IPR026877">
    <property type="entry name" value="DXPR_C"/>
</dbReference>
<dbReference type="InterPro" id="IPR036169">
    <property type="entry name" value="DXPR_C_sf"/>
</dbReference>
<dbReference type="InterPro" id="IPR036291">
    <property type="entry name" value="NAD(P)-bd_dom_sf"/>
</dbReference>
<dbReference type="NCBIfam" id="TIGR00243">
    <property type="entry name" value="Dxr"/>
    <property type="match status" value="1"/>
</dbReference>
<dbReference type="PANTHER" id="PTHR30525">
    <property type="entry name" value="1-DEOXY-D-XYLULOSE 5-PHOSPHATE REDUCTOISOMERASE"/>
    <property type="match status" value="1"/>
</dbReference>
<dbReference type="PANTHER" id="PTHR30525:SF0">
    <property type="entry name" value="1-DEOXY-D-XYLULOSE 5-PHOSPHATE REDUCTOISOMERASE, CHLOROPLASTIC"/>
    <property type="match status" value="1"/>
</dbReference>
<dbReference type="Pfam" id="PF08436">
    <property type="entry name" value="DXP_redisom_C"/>
    <property type="match status" value="1"/>
</dbReference>
<dbReference type="Pfam" id="PF02670">
    <property type="entry name" value="DXP_reductoisom"/>
    <property type="match status" value="1"/>
</dbReference>
<dbReference type="Pfam" id="PF13288">
    <property type="entry name" value="DXPR_C"/>
    <property type="match status" value="1"/>
</dbReference>
<dbReference type="PIRSF" id="PIRSF006205">
    <property type="entry name" value="Dxp_reductismrs"/>
    <property type="match status" value="1"/>
</dbReference>
<dbReference type="SUPFAM" id="SSF69055">
    <property type="entry name" value="1-deoxy-D-xylulose-5-phosphate reductoisomerase, C-terminal domain"/>
    <property type="match status" value="1"/>
</dbReference>
<dbReference type="SUPFAM" id="SSF55347">
    <property type="entry name" value="Glyceraldehyde-3-phosphate dehydrogenase-like, C-terminal domain"/>
    <property type="match status" value="1"/>
</dbReference>
<dbReference type="SUPFAM" id="SSF51735">
    <property type="entry name" value="NAD(P)-binding Rossmann-fold domains"/>
    <property type="match status" value="1"/>
</dbReference>
<proteinExistence type="inferred from homology"/>
<keyword id="KW-0414">Isoprene biosynthesis</keyword>
<keyword id="KW-0464">Manganese</keyword>
<keyword id="KW-0479">Metal-binding</keyword>
<keyword id="KW-0521">NADP</keyword>
<keyword id="KW-0560">Oxidoreductase</keyword>
<gene>
    <name evidence="1" type="primary">dxr</name>
    <name type="ordered locus">TT_C0504</name>
</gene>
<organism>
    <name type="scientific">Thermus thermophilus (strain ATCC BAA-163 / DSM 7039 / HB27)</name>
    <dbReference type="NCBI Taxonomy" id="262724"/>
    <lineage>
        <taxon>Bacteria</taxon>
        <taxon>Thermotogati</taxon>
        <taxon>Deinococcota</taxon>
        <taxon>Deinococci</taxon>
        <taxon>Thermales</taxon>
        <taxon>Thermaceae</taxon>
        <taxon>Thermus</taxon>
    </lineage>
</organism>
<name>DXR_THET2</name>
<protein>
    <recommendedName>
        <fullName evidence="1">1-deoxy-D-xylulose 5-phosphate reductoisomerase</fullName>
        <shortName evidence="1">DXP reductoisomerase</shortName>
        <ecNumber evidence="1">1.1.1.267</ecNumber>
    </recommendedName>
    <alternativeName>
        <fullName evidence="1">1-deoxyxylulose-5-phosphate reductoisomerase</fullName>
    </alternativeName>
    <alternativeName>
        <fullName evidence="1">2-C-methyl-D-erythritol 4-phosphate synthase</fullName>
    </alternativeName>
</protein>
<reference key="1">
    <citation type="journal article" date="2004" name="Nat. Biotechnol.">
        <title>The genome sequence of the extreme thermophile Thermus thermophilus.</title>
        <authorList>
            <person name="Henne A."/>
            <person name="Brueggemann H."/>
            <person name="Raasch C."/>
            <person name="Wiezer A."/>
            <person name="Hartsch T."/>
            <person name="Liesegang H."/>
            <person name="Johann A."/>
            <person name="Lienard T."/>
            <person name="Gohl O."/>
            <person name="Martinez-Arias R."/>
            <person name="Jacobi C."/>
            <person name="Starkuviene V."/>
            <person name="Schlenczeck S."/>
            <person name="Dencker S."/>
            <person name="Huber R."/>
            <person name="Klenk H.-P."/>
            <person name="Kramer W."/>
            <person name="Merkl R."/>
            <person name="Gottschalk G."/>
            <person name="Fritz H.-J."/>
        </authorList>
    </citation>
    <scope>NUCLEOTIDE SEQUENCE [LARGE SCALE GENOMIC DNA]</scope>
    <source>
        <strain>ATCC BAA-163 / DSM 7039 / HB27</strain>
    </source>
</reference>
<feature type="chain" id="PRO_0000163724" description="1-deoxy-D-xylulose 5-phosphate reductoisomerase">
    <location>
        <begin position="1"/>
        <end position="367"/>
    </location>
</feature>
<feature type="binding site" evidence="1">
    <location>
        <position position="10"/>
    </location>
    <ligand>
        <name>NADPH</name>
        <dbReference type="ChEBI" id="CHEBI:57783"/>
    </ligand>
</feature>
<feature type="binding site" evidence="1">
    <location>
        <position position="11"/>
    </location>
    <ligand>
        <name>NADPH</name>
        <dbReference type="ChEBI" id="CHEBI:57783"/>
    </ligand>
</feature>
<feature type="binding site" evidence="1">
    <location>
        <position position="12"/>
    </location>
    <ligand>
        <name>NADPH</name>
        <dbReference type="ChEBI" id="CHEBI:57783"/>
    </ligand>
</feature>
<feature type="binding site" evidence="1">
    <location>
        <position position="13"/>
    </location>
    <ligand>
        <name>NADPH</name>
        <dbReference type="ChEBI" id="CHEBI:57783"/>
    </ligand>
</feature>
<feature type="binding site" evidence="1">
    <location>
        <position position="34"/>
    </location>
    <ligand>
        <name>NADPH</name>
        <dbReference type="ChEBI" id="CHEBI:57783"/>
    </ligand>
</feature>
<feature type="binding site" evidence="1">
    <location>
        <position position="35"/>
    </location>
    <ligand>
        <name>NADPH</name>
        <dbReference type="ChEBI" id="CHEBI:57783"/>
    </ligand>
</feature>
<feature type="binding site" evidence="1">
    <location>
        <position position="36"/>
    </location>
    <ligand>
        <name>NADPH</name>
        <dbReference type="ChEBI" id="CHEBI:57783"/>
    </ligand>
</feature>
<feature type="binding site" evidence="1">
    <location>
        <position position="112"/>
    </location>
    <ligand>
        <name>NADPH</name>
        <dbReference type="ChEBI" id="CHEBI:57783"/>
    </ligand>
</feature>
<feature type="binding site" evidence="1">
    <location>
        <position position="113"/>
    </location>
    <ligand>
        <name>1-deoxy-D-xylulose 5-phosphate</name>
        <dbReference type="ChEBI" id="CHEBI:57792"/>
    </ligand>
</feature>
<feature type="binding site" evidence="1">
    <location>
        <position position="114"/>
    </location>
    <ligand>
        <name>NADPH</name>
        <dbReference type="ChEBI" id="CHEBI:57783"/>
    </ligand>
</feature>
<feature type="binding site" evidence="1">
    <location>
        <position position="138"/>
    </location>
    <ligand>
        <name>Mn(2+)</name>
        <dbReference type="ChEBI" id="CHEBI:29035"/>
    </ligand>
</feature>
<feature type="binding site" evidence="1">
    <location>
        <position position="139"/>
    </location>
    <ligand>
        <name>1-deoxy-D-xylulose 5-phosphate</name>
        <dbReference type="ChEBI" id="CHEBI:57792"/>
    </ligand>
</feature>
<feature type="binding site" evidence="1">
    <location>
        <position position="140"/>
    </location>
    <ligand>
        <name>1-deoxy-D-xylulose 5-phosphate</name>
        <dbReference type="ChEBI" id="CHEBI:57792"/>
    </ligand>
</feature>
<feature type="binding site" evidence="1">
    <location>
        <position position="140"/>
    </location>
    <ligand>
        <name>Mn(2+)</name>
        <dbReference type="ChEBI" id="CHEBI:29035"/>
    </ligand>
</feature>
<feature type="binding site" evidence="1">
    <location>
        <position position="164"/>
    </location>
    <ligand>
        <name>1-deoxy-D-xylulose 5-phosphate</name>
        <dbReference type="ChEBI" id="CHEBI:57792"/>
    </ligand>
</feature>
<feature type="binding site" evidence="1">
    <location>
        <position position="186"/>
    </location>
    <ligand>
        <name>1-deoxy-D-xylulose 5-phosphate</name>
        <dbReference type="ChEBI" id="CHEBI:57792"/>
    </ligand>
</feature>
<feature type="binding site" evidence="1">
    <location>
        <position position="192"/>
    </location>
    <ligand>
        <name>NADPH</name>
        <dbReference type="ChEBI" id="CHEBI:57783"/>
    </ligand>
</feature>
<feature type="binding site" evidence="1">
    <location>
        <position position="199"/>
    </location>
    <ligand>
        <name>1-deoxy-D-xylulose 5-phosphate</name>
        <dbReference type="ChEBI" id="CHEBI:57792"/>
    </ligand>
</feature>
<feature type="binding site" evidence="1">
    <location>
        <position position="204"/>
    </location>
    <ligand>
        <name>1-deoxy-D-xylulose 5-phosphate</name>
        <dbReference type="ChEBI" id="CHEBI:57792"/>
    </ligand>
</feature>
<feature type="binding site" evidence="1">
    <location>
        <position position="205"/>
    </location>
    <ligand>
        <name>1-deoxy-D-xylulose 5-phosphate</name>
        <dbReference type="ChEBI" id="CHEBI:57792"/>
    </ligand>
</feature>
<feature type="binding site" evidence="1">
    <location>
        <position position="208"/>
    </location>
    <ligand>
        <name>1-deoxy-D-xylulose 5-phosphate</name>
        <dbReference type="ChEBI" id="CHEBI:57792"/>
    </ligand>
</feature>
<feature type="binding site" evidence="1">
    <location>
        <position position="208"/>
    </location>
    <ligand>
        <name>Mn(2+)</name>
        <dbReference type="ChEBI" id="CHEBI:29035"/>
    </ligand>
</feature>